<comment type="function">
    <text>Involved in the metabolism of insect hormones and in the breakdown of synthetic insecticides.</text>
</comment>
<comment type="catalytic activity">
    <reaction>
        <text>an organic molecule + reduced [NADPH--hemoprotein reductase] + O2 = an alcohol + oxidized [NADPH--hemoprotein reductase] + H2O + H(+)</text>
        <dbReference type="Rhea" id="RHEA:17149"/>
        <dbReference type="Rhea" id="RHEA-COMP:11964"/>
        <dbReference type="Rhea" id="RHEA-COMP:11965"/>
        <dbReference type="ChEBI" id="CHEBI:15377"/>
        <dbReference type="ChEBI" id="CHEBI:15378"/>
        <dbReference type="ChEBI" id="CHEBI:15379"/>
        <dbReference type="ChEBI" id="CHEBI:30879"/>
        <dbReference type="ChEBI" id="CHEBI:57618"/>
        <dbReference type="ChEBI" id="CHEBI:58210"/>
        <dbReference type="ChEBI" id="CHEBI:142491"/>
        <dbReference type="EC" id="1.14.14.1"/>
    </reaction>
</comment>
<comment type="cofactor">
    <cofactor evidence="1">
        <name>heme</name>
        <dbReference type="ChEBI" id="CHEBI:30413"/>
    </cofactor>
</comment>
<comment type="subcellular location">
    <subcellularLocation>
        <location>Endoplasmic reticulum membrane</location>
        <topology>Peripheral membrane protein</topology>
    </subcellularLocation>
    <subcellularLocation>
        <location>Microsome membrane</location>
        <topology>Peripheral membrane protein</topology>
    </subcellularLocation>
</comment>
<comment type="similarity">
    <text evidence="2">Belongs to the cytochrome P450 family.</text>
</comment>
<feature type="chain" id="PRO_0000051865" description="Cytochrome P450 6A1">
    <location>
        <begin position="1"/>
        <end position="509"/>
    </location>
</feature>
<feature type="binding site" description="axial binding residue" evidence="1">
    <location>
        <position position="449"/>
    </location>
    <ligand>
        <name>heme</name>
        <dbReference type="ChEBI" id="CHEBI:30413"/>
    </ligand>
    <ligandPart>
        <name>Fe</name>
        <dbReference type="ChEBI" id="CHEBI:18248"/>
    </ligandPart>
</feature>
<feature type="sequence conflict" description="In Ref. 1; AAA29293." evidence="2" ref="1">
    <original>DPLP</original>
    <variation>GPFA</variation>
    <location>
        <begin position="70"/>
        <end position="73"/>
    </location>
</feature>
<feature type="sequence conflict" description="In Ref. 1; AAA29293." evidence="2" ref="1">
    <location>
        <begin position="372"/>
        <end position="373"/>
    </location>
</feature>
<protein>
    <recommendedName>
        <fullName>Cytochrome P450 6A1</fullName>
        <ecNumber>1.14.14.1</ecNumber>
    </recommendedName>
    <alternativeName>
        <fullName>CYPVIA1</fullName>
    </alternativeName>
</protein>
<accession>P13527</accession>
<evidence type="ECO:0000250" key="1"/>
<evidence type="ECO:0000305" key="2"/>
<proteinExistence type="evidence at transcript level"/>
<name>CP6A1_MUSDO</name>
<gene>
    <name type="primary">CYP6A1</name>
</gene>
<keyword id="KW-0256">Endoplasmic reticulum</keyword>
<keyword id="KW-0349">Heme</keyword>
<keyword id="KW-0408">Iron</keyword>
<keyword id="KW-0472">Membrane</keyword>
<keyword id="KW-0479">Metal-binding</keyword>
<keyword id="KW-0492">Microsome</keyword>
<keyword id="KW-0503">Monooxygenase</keyword>
<keyword id="KW-0560">Oxidoreductase</keyword>
<keyword id="KW-1185">Reference proteome</keyword>
<reference key="1">
    <citation type="journal article" date="1989" name="Proc. Natl. Acad. Sci. U.S.A.">
        <title>Isolation and sequence of cDNA encoding a cytochrome P-450 from an insecticide-resistant strain of the house fly, Musca domestica.</title>
        <authorList>
            <person name="Feyereisen R."/>
            <person name="Koener J.F."/>
            <person name="Farnsworth D.E."/>
            <person name="Nebert D.W."/>
        </authorList>
    </citation>
    <scope>NUCLEOTIDE SEQUENCE [MRNA]</scope>
</reference>
<organism>
    <name type="scientific">Musca domestica</name>
    <name type="common">House fly</name>
    <dbReference type="NCBI Taxonomy" id="7370"/>
    <lineage>
        <taxon>Eukaryota</taxon>
        <taxon>Metazoa</taxon>
        <taxon>Ecdysozoa</taxon>
        <taxon>Arthropoda</taxon>
        <taxon>Hexapoda</taxon>
        <taxon>Insecta</taxon>
        <taxon>Pterygota</taxon>
        <taxon>Neoptera</taxon>
        <taxon>Endopterygota</taxon>
        <taxon>Diptera</taxon>
        <taxon>Brachycera</taxon>
        <taxon>Muscomorpha</taxon>
        <taxon>Muscoidea</taxon>
        <taxon>Muscidae</taxon>
        <taxon>Musca</taxon>
    </lineage>
</organism>
<sequence length="509" mass="58731">MDFGSFLLYALGVLASLALYFVRWNFGYWKRRGIPHEEPHLVMGNVKGLRSKYHIGEIIADYYRKFKGSDPLPGIFLGHKPAAVVLDKELRKRVLIKDFSNFANRGLYYNEKDDPLTGHLVMVEGEKWRSLRTKLSPTFTAGKMKYMYNTVLEVGQRLLEVMYEKLEVSSELDMRDILARFNTDVIGSVAFGIECNSLRNPHDRFLAMGRKSIEVPRHNALIMAFIDSFPELSRKLGMRVLPEDVHQFFMSSIKETVDYREKNNIRRNDFLDLVLDLKNNPESISKLGGLTFNELAAQVFVFFLGGFETSSSTMGFALYELAQNQQLQDRLREEVNEVFDQFKEDNISYDALMNIPYLDQVLNETLRKYPVGVGSALTRQTLNDYVVPHNPKYVLPKGTLVFIPVLGIHYDPELYPNPEEFDPERFSPEMVKQRDSVDWLGFGDGPRNCIGMRFGKMQSRLGLALVIRHFRFTVCSRTDIPMQINPESLAWTPKNNLYLNVQAIRKKIK</sequence>
<dbReference type="EC" id="1.14.14.1"/>
<dbReference type="EMBL" id="L27242">
    <property type="protein sequence ID" value="AAA72423.1"/>
    <property type="molecule type" value="Genomic_DNA"/>
</dbReference>
<dbReference type="EMBL" id="M25367">
    <property type="protein sequence ID" value="AAA29293.1"/>
    <property type="molecule type" value="mRNA"/>
</dbReference>
<dbReference type="PIR" id="A32157">
    <property type="entry name" value="A32157"/>
</dbReference>
<dbReference type="RefSeq" id="NP_001274159.1">
    <property type="nucleotide sequence ID" value="NM_001287230.1"/>
</dbReference>
<dbReference type="SMR" id="P13527"/>
<dbReference type="GeneID" id="101889365"/>
<dbReference type="KEGG" id="mde:101889365"/>
<dbReference type="VEuPathDB" id="VectorBase:MDOA014776"/>
<dbReference type="VEuPathDB" id="VectorBase:MDOMA2_016358"/>
<dbReference type="eggNOG" id="KOG0158">
    <property type="taxonomic scope" value="Eukaryota"/>
</dbReference>
<dbReference type="OrthoDB" id="2789670at2759"/>
<dbReference type="Proteomes" id="UP000694905">
    <property type="component" value="Unplaced"/>
</dbReference>
<dbReference type="GO" id="GO:0005789">
    <property type="term" value="C:endoplasmic reticulum membrane"/>
    <property type="evidence" value="ECO:0007669"/>
    <property type="project" value="UniProtKB-SubCell"/>
</dbReference>
<dbReference type="GO" id="GO:0020037">
    <property type="term" value="F:heme binding"/>
    <property type="evidence" value="ECO:0007669"/>
    <property type="project" value="InterPro"/>
</dbReference>
<dbReference type="GO" id="GO:0005506">
    <property type="term" value="F:iron ion binding"/>
    <property type="evidence" value="ECO:0007669"/>
    <property type="project" value="InterPro"/>
</dbReference>
<dbReference type="GO" id="GO:0016712">
    <property type="term" value="F:oxidoreductase activity, acting on paired donors, with incorporation or reduction of molecular oxygen, reduced flavin or flavoprotein as one donor, and incorporation of one atom of oxygen"/>
    <property type="evidence" value="ECO:0007669"/>
    <property type="project" value="UniProtKB-EC"/>
</dbReference>
<dbReference type="CDD" id="cd11056">
    <property type="entry name" value="CYP6-like"/>
    <property type="match status" value="1"/>
</dbReference>
<dbReference type="FunFam" id="1.10.630.10:FF:000042">
    <property type="entry name" value="Cytochrome P450"/>
    <property type="match status" value="1"/>
</dbReference>
<dbReference type="Gene3D" id="1.10.630.10">
    <property type="entry name" value="Cytochrome P450"/>
    <property type="match status" value="1"/>
</dbReference>
<dbReference type="InterPro" id="IPR001128">
    <property type="entry name" value="Cyt_P450"/>
</dbReference>
<dbReference type="InterPro" id="IPR017972">
    <property type="entry name" value="Cyt_P450_CS"/>
</dbReference>
<dbReference type="InterPro" id="IPR002401">
    <property type="entry name" value="Cyt_P450_E_grp-I"/>
</dbReference>
<dbReference type="InterPro" id="IPR036396">
    <property type="entry name" value="Cyt_P450_sf"/>
</dbReference>
<dbReference type="InterPro" id="IPR050476">
    <property type="entry name" value="Insect_CytP450_Detox"/>
</dbReference>
<dbReference type="PANTHER" id="PTHR24292">
    <property type="entry name" value="CYTOCHROME P450"/>
    <property type="match status" value="1"/>
</dbReference>
<dbReference type="PANTHER" id="PTHR24292:SF100">
    <property type="entry name" value="CYTOCHROME P450 6A16, ISOFORM B-RELATED"/>
    <property type="match status" value="1"/>
</dbReference>
<dbReference type="Pfam" id="PF00067">
    <property type="entry name" value="p450"/>
    <property type="match status" value="1"/>
</dbReference>
<dbReference type="PRINTS" id="PR00463">
    <property type="entry name" value="EP450I"/>
</dbReference>
<dbReference type="PRINTS" id="PR00385">
    <property type="entry name" value="P450"/>
</dbReference>
<dbReference type="SUPFAM" id="SSF48264">
    <property type="entry name" value="Cytochrome P450"/>
    <property type="match status" value="1"/>
</dbReference>
<dbReference type="PROSITE" id="PS00086">
    <property type="entry name" value="CYTOCHROME_P450"/>
    <property type="match status" value="1"/>
</dbReference>